<accession>P42925</accession>
<accession>Q9ERF1</accession>
<comment type="function">
    <text>Seems to be involved in pore-forming activity and may contribute to the unspecific permeability of the peroxisomal membrane.</text>
</comment>
<comment type="subunit">
    <text evidence="1">Interacts with PEX19 and SIVA1.</text>
</comment>
<comment type="subcellular location">
    <subcellularLocation>
        <location>Peroxisome membrane</location>
        <topology>Multi-pass membrane protein</topology>
    </subcellularLocation>
</comment>
<comment type="similarity">
    <text evidence="3">Belongs to the peroxisomal membrane protein PXMP2/4 family.</text>
</comment>
<keyword id="KW-0472">Membrane</keyword>
<keyword id="KW-0576">Peroxisome</keyword>
<keyword id="KW-1185">Reference proteome</keyword>
<keyword id="KW-0812">Transmembrane</keyword>
<keyword id="KW-1133">Transmembrane helix</keyword>
<gene>
    <name type="primary">Pxmp2</name>
    <name type="synonym">Pmp22</name>
</gene>
<evidence type="ECO:0000250" key="1"/>
<evidence type="ECO:0000255" key="2"/>
<evidence type="ECO:0000305" key="3"/>
<feature type="chain" id="PRO_0000218930" description="Peroxisomal membrane protein 2">
    <location>
        <begin position="1"/>
        <end position="194"/>
    </location>
</feature>
<feature type="topological domain" description="Cytoplasmic" evidence="2">
    <location>
        <begin position="1"/>
        <end position="30"/>
    </location>
</feature>
<feature type="transmembrane region" description="Helical" evidence="2">
    <location>
        <begin position="31"/>
        <end position="51"/>
    </location>
</feature>
<feature type="topological domain" description="Peroxisomal" evidence="2">
    <location>
        <begin position="52"/>
        <end position="74"/>
    </location>
</feature>
<feature type="transmembrane region" description="Helical" evidence="2">
    <location>
        <begin position="75"/>
        <end position="95"/>
    </location>
</feature>
<feature type="topological domain" description="Cytoplasmic" evidence="2">
    <location>
        <begin position="96"/>
        <end position="113"/>
    </location>
</feature>
<feature type="transmembrane region" description="Helical" evidence="2">
    <location>
        <begin position="114"/>
        <end position="134"/>
    </location>
</feature>
<feature type="topological domain" description="Peroxisomal" evidence="2">
    <location>
        <begin position="135"/>
        <end position="172"/>
    </location>
</feature>
<feature type="transmembrane region" description="Helical" evidence="2">
    <location>
        <begin position="173"/>
        <end position="193"/>
    </location>
</feature>
<feature type="sequence conflict" description="In Ref. 2 and 3." evidence="3" ref="2 3">
    <original>KQR</original>
    <variation>RK</variation>
    <location>
        <begin position="58"/>
        <end position="60"/>
    </location>
</feature>
<feature type="sequence conflict" description="In Ref. 2 and 3." evidence="3" ref="2 3">
    <original>RL</original>
    <variation>QN</variation>
    <location>
        <begin position="64"/>
        <end position="65"/>
    </location>
</feature>
<protein>
    <recommendedName>
        <fullName>Peroxisomal membrane protein 2</fullName>
    </recommendedName>
    <alternativeName>
        <fullName>22 kDa peroxisomal membrane protein</fullName>
    </alternativeName>
</protein>
<name>PXMP2_MOUSE</name>
<sequence>MAPAASRLRVESELGSLPKRALAQYLLLLKLYPVLTKAVSSGILSALGNLLAQTIEKKQRKDSRLLEVSGLLRYLVYGLFVTGPLSHYLYLFMEYSVPPEVPWASVKRLLLDRLFFAPTFLLLFFFVMNLLEGKNVSVFVAKMRSGFWPALQMNWRMWTPLQFININYVPLQFRVLFANMAALFWYAYLASLGK</sequence>
<reference key="1">
    <citation type="journal article" date="1995" name="Biochem. Mol. Med.">
        <title>Differential evolution and expression of murine peroxisomal membrane protein genes.</title>
        <authorList>
            <person name="Bryant D.D."/>
            <person name="Wilson G.N."/>
        </authorList>
    </citation>
    <scope>NUCLEOTIDE SEQUENCE [GENOMIC DNA]</scope>
    <source>
        <strain>Swiss Webster</strain>
        <tissue>Liver</tissue>
    </source>
</reference>
<reference key="2">
    <citation type="journal article" date="2001" name="Gene">
        <title>Genomic organization, chromosomal localization and tissue specific expression of the murine Pxmp2 gene encoding the 22 kDa peroxisomal membrane protein (Pmp22).</title>
        <authorList>
            <person name="Luers G.H."/>
            <person name="Otte D.M."/>
            <person name="Subramani S."/>
            <person name="Franz T."/>
        </authorList>
    </citation>
    <scope>NUCLEOTIDE SEQUENCE [MRNA]</scope>
    <source>
        <strain>129/Sv</strain>
    </source>
</reference>
<reference key="3">
    <citation type="journal article" date="2005" name="Science">
        <title>The transcriptional landscape of the mammalian genome.</title>
        <authorList>
            <person name="Carninci P."/>
            <person name="Kasukawa T."/>
            <person name="Katayama S."/>
            <person name="Gough J."/>
            <person name="Frith M.C."/>
            <person name="Maeda N."/>
            <person name="Oyama R."/>
            <person name="Ravasi T."/>
            <person name="Lenhard B."/>
            <person name="Wells C."/>
            <person name="Kodzius R."/>
            <person name="Shimokawa K."/>
            <person name="Bajic V.B."/>
            <person name="Brenner S.E."/>
            <person name="Batalov S."/>
            <person name="Forrest A.R."/>
            <person name="Zavolan M."/>
            <person name="Davis M.J."/>
            <person name="Wilming L.G."/>
            <person name="Aidinis V."/>
            <person name="Allen J.E."/>
            <person name="Ambesi-Impiombato A."/>
            <person name="Apweiler R."/>
            <person name="Aturaliya R.N."/>
            <person name="Bailey T.L."/>
            <person name="Bansal M."/>
            <person name="Baxter L."/>
            <person name="Beisel K.W."/>
            <person name="Bersano T."/>
            <person name="Bono H."/>
            <person name="Chalk A.M."/>
            <person name="Chiu K.P."/>
            <person name="Choudhary V."/>
            <person name="Christoffels A."/>
            <person name="Clutterbuck D.R."/>
            <person name="Crowe M.L."/>
            <person name="Dalla E."/>
            <person name="Dalrymple B.P."/>
            <person name="de Bono B."/>
            <person name="Della Gatta G."/>
            <person name="di Bernardo D."/>
            <person name="Down T."/>
            <person name="Engstrom P."/>
            <person name="Fagiolini M."/>
            <person name="Faulkner G."/>
            <person name="Fletcher C.F."/>
            <person name="Fukushima T."/>
            <person name="Furuno M."/>
            <person name="Futaki S."/>
            <person name="Gariboldi M."/>
            <person name="Georgii-Hemming P."/>
            <person name="Gingeras T.R."/>
            <person name="Gojobori T."/>
            <person name="Green R.E."/>
            <person name="Gustincich S."/>
            <person name="Harbers M."/>
            <person name="Hayashi Y."/>
            <person name="Hensch T.K."/>
            <person name="Hirokawa N."/>
            <person name="Hill D."/>
            <person name="Huminiecki L."/>
            <person name="Iacono M."/>
            <person name="Ikeo K."/>
            <person name="Iwama A."/>
            <person name="Ishikawa T."/>
            <person name="Jakt M."/>
            <person name="Kanapin A."/>
            <person name="Katoh M."/>
            <person name="Kawasawa Y."/>
            <person name="Kelso J."/>
            <person name="Kitamura H."/>
            <person name="Kitano H."/>
            <person name="Kollias G."/>
            <person name="Krishnan S.P."/>
            <person name="Kruger A."/>
            <person name="Kummerfeld S.K."/>
            <person name="Kurochkin I.V."/>
            <person name="Lareau L.F."/>
            <person name="Lazarevic D."/>
            <person name="Lipovich L."/>
            <person name="Liu J."/>
            <person name="Liuni S."/>
            <person name="McWilliam S."/>
            <person name="Madan Babu M."/>
            <person name="Madera M."/>
            <person name="Marchionni L."/>
            <person name="Matsuda H."/>
            <person name="Matsuzawa S."/>
            <person name="Miki H."/>
            <person name="Mignone F."/>
            <person name="Miyake S."/>
            <person name="Morris K."/>
            <person name="Mottagui-Tabar S."/>
            <person name="Mulder N."/>
            <person name="Nakano N."/>
            <person name="Nakauchi H."/>
            <person name="Ng P."/>
            <person name="Nilsson R."/>
            <person name="Nishiguchi S."/>
            <person name="Nishikawa S."/>
            <person name="Nori F."/>
            <person name="Ohara O."/>
            <person name="Okazaki Y."/>
            <person name="Orlando V."/>
            <person name="Pang K.C."/>
            <person name="Pavan W.J."/>
            <person name="Pavesi G."/>
            <person name="Pesole G."/>
            <person name="Petrovsky N."/>
            <person name="Piazza S."/>
            <person name="Reed J."/>
            <person name="Reid J.F."/>
            <person name="Ring B.Z."/>
            <person name="Ringwald M."/>
            <person name="Rost B."/>
            <person name="Ruan Y."/>
            <person name="Salzberg S.L."/>
            <person name="Sandelin A."/>
            <person name="Schneider C."/>
            <person name="Schoenbach C."/>
            <person name="Sekiguchi K."/>
            <person name="Semple C.A."/>
            <person name="Seno S."/>
            <person name="Sessa L."/>
            <person name="Sheng Y."/>
            <person name="Shibata Y."/>
            <person name="Shimada H."/>
            <person name="Shimada K."/>
            <person name="Silva D."/>
            <person name="Sinclair B."/>
            <person name="Sperling S."/>
            <person name="Stupka E."/>
            <person name="Sugiura K."/>
            <person name="Sultana R."/>
            <person name="Takenaka Y."/>
            <person name="Taki K."/>
            <person name="Tammoja K."/>
            <person name="Tan S.L."/>
            <person name="Tang S."/>
            <person name="Taylor M.S."/>
            <person name="Tegner J."/>
            <person name="Teichmann S.A."/>
            <person name="Ueda H.R."/>
            <person name="van Nimwegen E."/>
            <person name="Verardo R."/>
            <person name="Wei C.L."/>
            <person name="Yagi K."/>
            <person name="Yamanishi H."/>
            <person name="Zabarovsky E."/>
            <person name="Zhu S."/>
            <person name="Zimmer A."/>
            <person name="Hide W."/>
            <person name="Bult C."/>
            <person name="Grimmond S.M."/>
            <person name="Teasdale R.D."/>
            <person name="Liu E.T."/>
            <person name="Brusic V."/>
            <person name="Quackenbush J."/>
            <person name="Wahlestedt C."/>
            <person name="Mattick J.S."/>
            <person name="Hume D.A."/>
            <person name="Kai C."/>
            <person name="Sasaki D."/>
            <person name="Tomaru Y."/>
            <person name="Fukuda S."/>
            <person name="Kanamori-Katayama M."/>
            <person name="Suzuki M."/>
            <person name="Aoki J."/>
            <person name="Arakawa T."/>
            <person name="Iida J."/>
            <person name="Imamura K."/>
            <person name="Itoh M."/>
            <person name="Kato T."/>
            <person name="Kawaji H."/>
            <person name="Kawagashira N."/>
            <person name="Kawashima T."/>
            <person name="Kojima M."/>
            <person name="Kondo S."/>
            <person name="Konno H."/>
            <person name="Nakano K."/>
            <person name="Ninomiya N."/>
            <person name="Nishio T."/>
            <person name="Okada M."/>
            <person name="Plessy C."/>
            <person name="Shibata K."/>
            <person name="Shiraki T."/>
            <person name="Suzuki S."/>
            <person name="Tagami M."/>
            <person name="Waki K."/>
            <person name="Watahiki A."/>
            <person name="Okamura-Oho Y."/>
            <person name="Suzuki H."/>
            <person name="Kawai J."/>
            <person name="Hayashizaki Y."/>
        </authorList>
    </citation>
    <scope>NUCLEOTIDE SEQUENCE [LARGE SCALE MRNA]</scope>
    <source>
        <strain>C57BL/6J</strain>
        <tissue>Heart</tissue>
    </source>
</reference>
<reference key="4">
    <citation type="journal article" date="2010" name="Cell">
        <title>A tissue-specific atlas of mouse protein phosphorylation and expression.</title>
        <authorList>
            <person name="Huttlin E.L."/>
            <person name="Jedrychowski M.P."/>
            <person name="Elias J.E."/>
            <person name="Goswami T."/>
            <person name="Rad R."/>
            <person name="Beausoleil S.A."/>
            <person name="Villen J."/>
            <person name="Haas W."/>
            <person name="Sowa M.E."/>
            <person name="Gygi S.P."/>
        </authorList>
    </citation>
    <scope>IDENTIFICATION BY MASS SPECTROMETRY [LARGE SCALE ANALYSIS]</scope>
    <source>
        <tissue>Brown adipose tissue</tissue>
        <tissue>Heart</tissue>
        <tissue>Kidney</tissue>
        <tissue>Liver</tissue>
    </source>
</reference>
<dbReference type="EMBL" id="L28835">
    <property type="protein sequence ID" value="AAA39957.1"/>
    <property type="molecule type" value="Genomic_DNA"/>
</dbReference>
<dbReference type="EMBL" id="AF309644">
    <property type="protein sequence ID" value="AAG25724.1"/>
    <property type="molecule type" value="mRNA"/>
</dbReference>
<dbReference type="EMBL" id="AK003118">
    <property type="protein sequence ID" value="BAB22578.1"/>
    <property type="molecule type" value="mRNA"/>
</dbReference>
<dbReference type="RefSeq" id="NP_033019.2">
    <property type="nucleotide sequence ID" value="NM_008993.2"/>
</dbReference>
<dbReference type="FunCoup" id="P42925">
    <property type="interactions" value="343"/>
</dbReference>
<dbReference type="STRING" id="10090.ENSMUSP00000031472"/>
<dbReference type="GlyGen" id="P42925">
    <property type="glycosylation" value="1 site, 1 O-linked glycan (1 site)"/>
</dbReference>
<dbReference type="iPTMnet" id="P42925"/>
<dbReference type="PhosphoSitePlus" id="P42925"/>
<dbReference type="jPOST" id="P42925"/>
<dbReference type="PaxDb" id="10090-ENSMUSP00000031472"/>
<dbReference type="PeptideAtlas" id="P42925"/>
<dbReference type="ProteomicsDB" id="301932"/>
<dbReference type="DNASU" id="19301"/>
<dbReference type="GeneID" id="19301"/>
<dbReference type="KEGG" id="mmu:19301"/>
<dbReference type="AGR" id="MGI:107487"/>
<dbReference type="CTD" id="5827"/>
<dbReference type="MGI" id="MGI:107487">
    <property type="gene designation" value="Pxmp2"/>
</dbReference>
<dbReference type="eggNOG" id="KOG1944">
    <property type="taxonomic scope" value="Eukaryota"/>
</dbReference>
<dbReference type="InParanoid" id="P42925"/>
<dbReference type="OrthoDB" id="860at2759"/>
<dbReference type="PhylomeDB" id="P42925"/>
<dbReference type="Reactome" id="R-MMU-9603798">
    <property type="pathway name" value="Class I peroxisomal membrane protein import"/>
</dbReference>
<dbReference type="BioGRID-ORCS" id="19301">
    <property type="hits" value="1 hit in 76 CRISPR screens"/>
</dbReference>
<dbReference type="PRO" id="PR:P42925"/>
<dbReference type="Proteomes" id="UP000000589">
    <property type="component" value="Unplaced"/>
</dbReference>
<dbReference type="RNAct" id="P42925">
    <property type="molecule type" value="protein"/>
</dbReference>
<dbReference type="GO" id="GO:0005739">
    <property type="term" value="C:mitochondrion"/>
    <property type="evidence" value="ECO:0007005"/>
    <property type="project" value="MGI"/>
</dbReference>
<dbReference type="GO" id="GO:0005778">
    <property type="term" value="C:peroxisomal membrane"/>
    <property type="evidence" value="ECO:0000304"/>
    <property type="project" value="Reactome"/>
</dbReference>
<dbReference type="InterPro" id="IPR007248">
    <property type="entry name" value="Mpv17_PMP22"/>
</dbReference>
<dbReference type="PANTHER" id="PTHR11266:SF80">
    <property type="entry name" value="PEROXISOMAL MEMBRANE PROTEIN 2"/>
    <property type="match status" value="1"/>
</dbReference>
<dbReference type="PANTHER" id="PTHR11266">
    <property type="entry name" value="PEROXISOMAL MEMBRANE PROTEIN 2, PXMP2 MPV17"/>
    <property type="match status" value="1"/>
</dbReference>
<dbReference type="Pfam" id="PF04117">
    <property type="entry name" value="Mpv17_PMP22"/>
    <property type="match status" value="1"/>
</dbReference>
<organism>
    <name type="scientific">Mus musculus</name>
    <name type="common">Mouse</name>
    <dbReference type="NCBI Taxonomy" id="10090"/>
    <lineage>
        <taxon>Eukaryota</taxon>
        <taxon>Metazoa</taxon>
        <taxon>Chordata</taxon>
        <taxon>Craniata</taxon>
        <taxon>Vertebrata</taxon>
        <taxon>Euteleostomi</taxon>
        <taxon>Mammalia</taxon>
        <taxon>Eutheria</taxon>
        <taxon>Euarchontoglires</taxon>
        <taxon>Glires</taxon>
        <taxon>Rodentia</taxon>
        <taxon>Myomorpha</taxon>
        <taxon>Muroidea</taxon>
        <taxon>Muridae</taxon>
        <taxon>Murinae</taxon>
        <taxon>Mus</taxon>
        <taxon>Mus</taxon>
    </lineage>
</organism>
<proteinExistence type="evidence at protein level"/>